<accession>C6E9F3</accession>
<evidence type="ECO:0000255" key="1">
    <source>
        <dbReference type="HAMAP-Rule" id="MF_01346"/>
    </source>
</evidence>
<comment type="function">
    <text evidence="1">Produces ATP from ADP in the presence of a proton gradient across the membrane. The alpha chain is a regulatory subunit.</text>
</comment>
<comment type="catalytic activity">
    <reaction evidence="1">
        <text>ATP + H2O + 4 H(+)(in) = ADP + phosphate + 5 H(+)(out)</text>
        <dbReference type="Rhea" id="RHEA:57720"/>
        <dbReference type="ChEBI" id="CHEBI:15377"/>
        <dbReference type="ChEBI" id="CHEBI:15378"/>
        <dbReference type="ChEBI" id="CHEBI:30616"/>
        <dbReference type="ChEBI" id="CHEBI:43474"/>
        <dbReference type="ChEBI" id="CHEBI:456216"/>
        <dbReference type="EC" id="7.1.2.2"/>
    </reaction>
</comment>
<comment type="subunit">
    <text evidence="1">F-type ATPases have 2 components, CF(1) - the catalytic core - and CF(0) - the membrane proton channel. CF(1) has five subunits: alpha(3), beta(3), gamma(1), delta(1), epsilon(1). CF(0) has three main subunits: a(1), b(2) and c(9-12). The alpha and beta chains form an alternating ring which encloses part of the gamma chain. CF(1) is attached to CF(0) by a central stalk formed by the gamma and epsilon chains, while a peripheral stalk is formed by the delta and b chains.</text>
</comment>
<comment type="subcellular location">
    <subcellularLocation>
        <location evidence="1">Cell inner membrane</location>
        <topology evidence="1">Peripheral membrane protein</topology>
    </subcellularLocation>
</comment>
<comment type="similarity">
    <text evidence="1">Belongs to the ATPase alpha/beta chains family.</text>
</comment>
<name>ATPA_GEOSM</name>
<protein>
    <recommendedName>
        <fullName evidence="1">ATP synthase subunit alpha</fullName>
        <ecNumber evidence="1">7.1.2.2</ecNumber>
    </recommendedName>
    <alternativeName>
        <fullName evidence="1">ATP synthase F1 sector subunit alpha</fullName>
    </alternativeName>
    <alternativeName>
        <fullName evidence="1">F-ATPase subunit alpha</fullName>
    </alternativeName>
</protein>
<keyword id="KW-0066">ATP synthesis</keyword>
<keyword id="KW-0067">ATP-binding</keyword>
<keyword id="KW-0997">Cell inner membrane</keyword>
<keyword id="KW-1003">Cell membrane</keyword>
<keyword id="KW-0139">CF(1)</keyword>
<keyword id="KW-0375">Hydrogen ion transport</keyword>
<keyword id="KW-0406">Ion transport</keyword>
<keyword id="KW-0472">Membrane</keyword>
<keyword id="KW-0547">Nucleotide-binding</keyword>
<keyword id="KW-1278">Translocase</keyword>
<keyword id="KW-0813">Transport</keyword>
<organism>
    <name type="scientific">Geobacter sp. (strain M21)</name>
    <dbReference type="NCBI Taxonomy" id="443144"/>
    <lineage>
        <taxon>Bacteria</taxon>
        <taxon>Pseudomonadati</taxon>
        <taxon>Thermodesulfobacteriota</taxon>
        <taxon>Desulfuromonadia</taxon>
        <taxon>Geobacterales</taxon>
        <taxon>Geobacteraceae</taxon>
        <taxon>Geobacter</taxon>
    </lineage>
</organism>
<dbReference type="EC" id="7.1.2.2" evidence="1"/>
<dbReference type="EMBL" id="CP001661">
    <property type="protein sequence ID" value="ACT20053.1"/>
    <property type="molecule type" value="Genomic_DNA"/>
</dbReference>
<dbReference type="SMR" id="C6E9F3"/>
<dbReference type="STRING" id="443144.GM21_4037"/>
<dbReference type="KEGG" id="gem:GM21_4037"/>
<dbReference type="eggNOG" id="COG0056">
    <property type="taxonomic scope" value="Bacteria"/>
</dbReference>
<dbReference type="HOGENOM" id="CLU_010091_2_1_7"/>
<dbReference type="OrthoDB" id="9803053at2"/>
<dbReference type="GO" id="GO:0005886">
    <property type="term" value="C:plasma membrane"/>
    <property type="evidence" value="ECO:0007669"/>
    <property type="project" value="UniProtKB-SubCell"/>
</dbReference>
<dbReference type="GO" id="GO:0045259">
    <property type="term" value="C:proton-transporting ATP synthase complex"/>
    <property type="evidence" value="ECO:0007669"/>
    <property type="project" value="UniProtKB-KW"/>
</dbReference>
<dbReference type="GO" id="GO:0043531">
    <property type="term" value="F:ADP binding"/>
    <property type="evidence" value="ECO:0007669"/>
    <property type="project" value="TreeGrafter"/>
</dbReference>
<dbReference type="GO" id="GO:0005524">
    <property type="term" value="F:ATP binding"/>
    <property type="evidence" value="ECO:0007669"/>
    <property type="project" value="UniProtKB-UniRule"/>
</dbReference>
<dbReference type="GO" id="GO:0046933">
    <property type="term" value="F:proton-transporting ATP synthase activity, rotational mechanism"/>
    <property type="evidence" value="ECO:0007669"/>
    <property type="project" value="UniProtKB-UniRule"/>
</dbReference>
<dbReference type="CDD" id="cd18113">
    <property type="entry name" value="ATP-synt_F1_alpha_C"/>
    <property type="match status" value="1"/>
</dbReference>
<dbReference type="CDD" id="cd18116">
    <property type="entry name" value="ATP-synt_F1_alpha_N"/>
    <property type="match status" value="1"/>
</dbReference>
<dbReference type="CDD" id="cd01132">
    <property type="entry name" value="F1-ATPase_alpha_CD"/>
    <property type="match status" value="1"/>
</dbReference>
<dbReference type="FunFam" id="1.20.150.20:FF:000001">
    <property type="entry name" value="ATP synthase subunit alpha"/>
    <property type="match status" value="1"/>
</dbReference>
<dbReference type="FunFam" id="2.40.30.20:FF:000001">
    <property type="entry name" value="ATP synthase subunit alpha"/>
    <property type="match status" value="1"/>
</dbReference>
<dbReference type="FunFam" id="3.40.50.300:FF:000002">
    <property type="entry name" value="ATP synthase subunit alpha"/>
    <property type="match status" value="1"/>
</dbReference>
<dbReference type="Gene3D" id="2.40.30.20">
    <property type="match status" value="1"/>
</dbReference>
<dbReference type="Gene3D" id="1.20.150.20">
    <property type="entry name" value="ATP synthase alpha/beta chain, C-terminal domain"/>
    <property type="match status" value="1"/>
</dbReference>
<dbReference type="Gene3D" id="3.40.50.300">
    <property type="entry name" value="P-loop containing nucleotide triphosphate hydrolases"/>
    <property type="match status" value="1"/>
</dbReference>
<dbReference type="HAMAP" id="MF_01346">
    <property type="entry name" value="ATP_synth_alpha_bact"/>
    <property type="match status" value="1"/>
</dbReference>
<dbReference type="InterPro" id="IPR023366">
    <property type="entry name" value="ATP_synth_asu-like_sf"/>
</dbReference>
<dbReference type="InterPro" id="IPR000793">
    <property type="entry name" value="ATP_synth_asu_C"/>
</dbReference>
<dbReference type="InterPro" id="IPR038376">
    <property type="entry name" value="ATP_synth_asu_C_sf"/>
</dbReference>
<dbReference type="InterPro" id="IPR033732">
    <property type="entry name" value="ATP_synth_F1_a_nt-bd_dom"/>
</dbReference>
<dbReference type="InterPro" id="IPR005294">
    <property type="entry name" value="ATP_synth_F1_asu"/>
</dbReference>
<dbReference type="InterPro" id="IPR020003">
    <property type="entry name" value="ATPase_a/bsu_AS"/>
</dbReference>
<dbReference type="InterPro" id="IPR004100">
    <property type="entry name" value="ATPase_F1/V1/A1_a/bsu_N"/>
</dbReference>
<dbReference type="InterPro" id="IPR036121">
    <property type="entry name" value="ATPase_F1/V1/A1_a/bsu_N_sf"/>
</dbReference>
<dbReference type="InterPro" id="IPR000194">
    <property type="entry name" value="ATPase_F1/V1/A1_a/bsu_nucl-bd"/>
</dbReference>
<dbReference type="InterPro" id="IPR027417">
    <property type="entry name" value="P-loop_NTPase"/>
</dbReference>
<dbReference type="NCBIfam" id="TIGR00962">
    <property type="entry name" value="atpA"/>
    <property type="match status" value="1"/>
</dbReference>
<dbReference type="NCBIfam" id="NF009884">
    <property type="entry name" value="PRK13343.1"/>
    <property type="match status" value="1"/>
</dbReference>
<dbReference type="PANTHER" id="PTHR48082">
    <property type="entry name" value="ATP SYNTHASE SUBUNIT ALPHA, MITOCHONDRIAL"/>
    <property type="match status" value="1"/>
</dbReference>
<dbReference type="PANTHER" id="PTHR48082:SF2">
    <property type="entry name" value="ATP SYNTHASE SUBUNIT ALPHA, MITOCHONDRIAL"/>
    <property type="match status" value="1"/>
</dbReference>
<dbReference type="Pfam" id="PF00006">
    <property type="entry name" value="ATP-synt_ab"/>
    <property type="match status" value="1"/>
</dbReference>
<dbReference type="Pfam" id="PF00306">
    <property type="entry name" value="ATP-synt_ab_C"/>
    <property type="match status" value="1"/>
</dbReference>
<dbReference type="Pfam" id="PF02874">
    <property type="entry name" value="ATP-synt_ab_N"/>
    <property type="match status" value="1"/>
</dbReference>
<dbReference type="PIRSF" id="PIRSF039088">
    <property type="entry name" value="F_ATPase_subunit_alpha"/>
    <property type="match status" value="1"/>
</dbReference>
<dbReference type="SUPFAM" id="SSF47917">
    <property type="entry name" value="C-terminal domain of alpha and beta subunits of F1 ATP synthase"/>
    <property type="match status" value="1"/>
</dbReference>
<dbReference type="SUPFAM" id="SSF50615">
    <property type="entry name" value="N-terminal domain of alpha and beta subunits of F1 ATP synthase"/>
    <property type="match status" value="1"/>
</dbReference>
<dbReference type="SUPFAM" id="SSF52540">
    <property type="entry name" value="P-loop containing nucleoside triphosphate hydrolases"/>
    <property type="match status" value="1"/>
</dbReference>
<dbReference type="PROSITE" id="PS00152">
    <property type="entry name" value="ATPASE_ALPHA_BETA"/>
    <property type="match status" value="1"/>
</dbReference>
<reference key="1">
    <citation type="submission" date="2009-07" db="EMBL/GenBank/DDBJ databases">
        <title>Complete sequence of Geobacter sp. M21.</title>
        <authorList>
            <consortium name="US DOE Joint Genome Institute"/>
            <person name="Lucas S."/>
            <person name="Copeland A."/>
            <person name="Lapidus A."/>
            <person name="Glavina del Rio T."/>
            <person name="Dalin E."/>
            <person name="Tice H."/>
            <person name="Bruce D."/>
            <person name="Goodwin L."/>
            <person name="Pitluck S."/>
            <person name="Saunders E."/>
            <person name="Brettin T."/>
            <person name="Detter J.C."/>
            <person name="Han C."/>
            <person name="Larimer F."/>
            <person name="Land M."/>
            <person name="Hauser L."/>
            <person name="Kyrpides N."/>
            <person name="Ovchinnikova G."/>
            <person name="Lovley D."/>
        </authorList>
    </citation>
    <scope>NUCLEOTIDE SEQUENCE [LARGE SCALE GENOMIC DNA]</scope>
    <source>
        <strain>M21</strain>
    </source>
</reference>
<gene>
    <name evidence="1" type="primary">atpA</name>
    <name type="ordered locus">GM21_4037</name>
</gene>
<sequence>MEIKAEEISEIIRKQIKEYGTEVAVAETGTIISIGDGIARIHGLDKAMAGELLEFPGGITGMVLNLEEDNVGAAILGEFSEIKEGDSVKLTGKIVEVPVGPALIGRVVDAIGNPIDGLGPINTDTFGKVEVKAPGIVKRKSVHQPMQTGLKAIDSMVPIGRGQRELIIGDRQTGKTAVAIDTIINQKGGDVVCIYVAIGQKRSTVAQVVSKLKEHGAMDYTIVVAATASEPAPLQFIAPYTGVTMGEFFRDSGKHALIIYDDLSKQAVAYRQLSLLLRRPPGREAYPGDVFYLHSRLLERACKVSDDCGAGSLTALPVIETQAGDVSAYIPTNVISITDGQIYLESDLFYSGVRPAINVGLSVSRVGGSAQVKAMKQVAGTLRLALAQYREMAAFAQFGSDLDKATQMQLARGARLVEILKQPQYRPIPNEKQVLIIFAANNGFVDEYPIGSLGRYETELYAFFDSRKATLLGELRDKKAIDDAMKGEIIASLEEFKKEFTA</sequence>
<feature type="chain" id="PRO_1000214810" description="ATP synthase subunit alpha">
    <location>
        <begin position="1"/>
        <end position="502"/>
    </location>
</feature>
<feature type="binding site" evidence="1">
    <location>
        <begin position="169"/>
        <end position="176"/>
    </location>
    <ligand>
        <name>ATP</name>
        <dbReference type="ChEBI" id="CHEBI:30616"/>
    </ligand>
</feature>
<feature type="site" description="Required for activity" evidence="1">
    <location>
        <position position="362"/>
    </location>
</feature>
<proteinExistence type="inferred from homology"/>